<comment type="function">
    <text>DNA-dependent RNA polymerase catalyzes the transcription of DNA into RNA using the four ribonucleoside triphosphates as substrates.</text>
</comment>
<comment type="catalytic activity">
    <reaction evidence="1">
        <text>RNA(n) + a ribonucleoside 5'-triphosphate = RNA(n+1) + diphosphate</text>
        <dbReference type="Rhea" id="RHEA:21248"/>
        <dbReference type="Rhea" id="RHEA-COMP:14527"/>
        <dbReference type="Rhea" id="RHEA-COMP:17342"/>
        <dbReference type="ChEBI" id="CHEBI:33019"/>
        <dbReference type="ChEBI" id="CHEBI:61557"/>
        <dbReference type="ChEBI" id="CHEBI:140395"/>
        <dbReference type="EC" id="2.7.7.6"/>
    </reaction>
</comment>
<comment type="subunit">
    <text evidence="1">The RNAP catalytic core consists of 2 alpha, 1 beta, 1 beta' and 1 omega subunit. When a sigma factor is associated with the core the holoenzyme is formed, which can initiate transcription.</text>
</comment>
<comment type="similarity">
    <text evidence="1">Belongs to the RNA polymerase beta chain family.</text>
</comment>
<comment type="sequence caution" evidence="2">
    <conflict type="erroneous initiation">
        <sequence resource="EMBL-CDS" id="ABD29672"/>
    </conflict>
</comment>
<keyword id="KW-0002">3D-structure</keyword>
<keyword id="KW-0240">DNA-directed RNA polymerase</keyword>
<keyword id="KW-0548">Nucleotidyltransferase</keyword>
<keyword id="KW-1185">Reference proteome</keyword>
<keyword id="KW-0804">Transcription</keyword>
<keyword id="KW-0808">Transferase</keyword>
<proteinExistence type="evidence at protein level"/>
<name>RPOB_STAA8</name>
<protein>
    <recommendedName>
        <fullName evidence="1">DNA-directed RNA polymerase subunit beta</fullName>
        <shortName evidence="1">RNAP subunit beta</shortName>
        <ecNumber evidence="1">2.7.7.6</ecNumber>
    </recommendedName>
    <alternativeName>
        <fullName evidence="1">RNA polymerase subunit beta</fullName>
    </alternativeName>
    <alternativeName>
        <fullName evidence="1">Transcriptase subunit beta</fullName>
    </alternativeName>
</protein>
<reference key="1">
    <citation type="journal article" date="1995" name="Biochim. Biophys. Acta">
        <title>Nucleotide sequence of the Staphylococcus aureus RNA polymerase rpoB gene and comparison of its predicted amino acid sequence with those of other bacteria.</title>
        <authorList>
            <person name="Aboshkiwa M.A."/>
            <person name="Rowland G."/>
            <person name="Coleman G."/>
        </authorList>
    </citation>
    <scope>NUCLEOTIDE SEQUENCE [GENOMIC DNA]</scope>
</reference>
<reference key="2">
    <citation type="book" date="2006" name="Gram positive pathogens, 2nd edition">
        <title>The Staphylococcus aureus NCTC 8325 genome.</title>
        <editorList>
            <person name="Fischetti V."/>
            <person name="Novick R."/>
            <person name="Ferretti J."/>
            <person name="Portnoy D."/>
            <person name="Rood J."/>
        </editorList>
        <authorList>
            <person name="Gillaspy A.F."/>
            <person name="Worrell V."/>
            <person name="Orvis J."/>
            <person name="Roe B.A."/>
            <person name="Dyer D.W."/>
            <person name="Iandolo J.J."/>
        </authorList>
    </citation>
    <scope>NUCLEOTIDE SEQUENCE [LARGE SCALE GENOMIC DNA]</scope>
    <source>
        <strain>NCTC 8325 / PS 47</strain>
    </source>
</reference>
<reference key="3">
    <citation type="journal article" date="1992" name="J. Gen. Microbiol.">
        <title>Cloning and physical mapping of the Staphylococcus aureus rplL, rpoB and rpoC genes, encoding ribosomal protein L7/L12 and RNA polymerase subunits beta and beta'.</title>
        <authorList>
            <person name="Aboshkiwa M.A."/>
            <person name="Coleman G."/>
            <person name="Rowland G.C."/>
        </authorList>
    </citation>
    <scope>NUCLEOTIDE SEQUENCE [GENOMIC DNA] OF 379-460 AND 538-622</scope>
</reference>
<dbReference type="EC" id="2.7.7.6" evidence="1"/>
<dbReference type="EMBL" id="X64172">
    <property type="protein sequence ID" value="CAA45512.1"/>
    <property type="molecule type" value="Genomic_DNA"/>
</dbReference>
<dbReference type="EMBL" id="CP000253">
    <property type="protein sequence ID" value="ABD29672.1"/>
    <property type="status" value="ALT_INIT"/>
    <property type="molecule type" value="Genomic_DNA"/>
</dbReference>
<dbReference type="PIR" id="S59951">
    <property type="entry name" value="S59951"/>
</dbReference>
<dbReference type="RefSeq" id="WP_000918667.1">
    <property type="nucleotide sequence ID" value="NZ_LS483365.1"/>
</dbReference>
<dbReference type="RefSeq" id="YP_499096.2">
    <property type="nucleotide sequence ID" value="NC_007795.1"/>
</dbReference>
<dbReference type="PDB" id="8X6F">
    <property type="method" value="EM"/>
    <property type="resolution" value="3.70 A"/>
    <property type="chains" value="C=1-1183"/>
</dbReference>
<dbReference type="PDB" id="8X6G">
    <property type="method" value="EM"/>
    <property type="resolution" value="3.30 A"/>
    <property type="chains" value="C=1-1183"/>
</dbReference>
<dbReference type="PDBsum" id="8X6F"/>
<dbReference type="PDBsum" id="8X6G"/>
<dbReference type="SMR" id="P47768"/>
<dbReference type="STRING" id="93061.SAOUHSC_00524"/>
<dbReference type="PaxDb" id="1280-SAXN108_0596"/>
<dbReference type="GeneID" id="3920377"/>
<dbReference type="KEGG" id="sao:SAOUHSC_00524"/>
<dbReference type="PATRIC" id="fig|93061.5.peg.470"/>
<dbReference type="eggNOG" id="COG0085">
    <property type="taxonomic scope" value="Bacteria"/>
</dbReference>
<dbReference type="HOGENOM" id="CLU_000524_4_1_9"/>
<dbReference type="OrthoDB" id="9803954at2"/>
<dbReference type="PRO" id="PR:P47768"/>
<dbReference type="Proteomes" id="UP000008816">
    <property type="component" value="Chromosome"/>
</dbReference>
<dbReference type="GO" id="GO:0000428">
    <property type="term" value="C:DNA-directed RNA polymerase complex"/>
    <property type="evidence" value="ECO:0007669"/>
    <property type="project" value="UniProtKB-KW"/>
</dbReference>
<dbReference type="GO" id="GO:0003677">
    <property type="term" value="F:DNA binding"/>
    <property type="evidence" value="ECO:0007669"/>
    <property type="project" value="UniProtKB-UniRule"/>
</dbReference>
<dbReference type="GO" id="GO:0003899">
    <property type="term" value="F:DNA-directed RNA polymerase activity"/>
    <property type="evidence" value="ECO:0007669"/>
    <property type="project" value="UniProtKB-UniRule"/>
</dbReference>
<dbReference type="GO" id="GO:0032549">
    <property type="term" value="F:ribonucleoside binding"/>
    <property type="evidence" value="ECO:0007669"/>
    <property type="project" value="InterPro"/>
</dbReference>
<dbReference type="GO" id="GO:0006351">
    <property type="term" value="P:DNA-templated transcription"/>
    <property type="evidence" value="ECO:0007669"/>
    <property type="project" value="UniProtKB-UniRule"/>
</dbReference>
<dbReference type="CDD" id="cd00653">
    <property type="entry name" value="RNA_pol_B_RPB2"/>
    <property type="match status" value="1"/>
</dbReference>
<dbReference type="FunFam" id="3.90.1800.10:FF:000001">
    <property type="entry name" value="DNA-directed RNA polymerase subunit beta"/>
    <property type="match status" value="1"/>
</dbReference>
<dbReference type="Gene3D" id="2.40.50.100">
    <property type="match status" value="1"/>
</dbReference>
<dbReference type="Gene3D" id="2.40.50.150">
    <property type="match status" value="1"/>
</dbReference>
<dbReference type="Gene3D" id="3.90.1100.10">
    <property type="match status" value="3"/>
</dbReference>
<dbReference type="Gene3D" id="2.40.270.10">
    <property type="entry name" value="DNA-directed RNA polymerase, subunit 2, domain 6"/>
    <property type="match status" value="1"/>
</dbReference>
<dbReference type="Gene3D" id="3.90.1800.10">
    <property type="entry name" value="RNA polymerase alpha subunit dimerisation domain"/>
    <property type="match status" value="1"/>
</dbReference>
<dbReference type="Gene3D" id="3.90.1110.10">
    <property type="entry name" value="RNA polymerase Rpb2, domain 2"/>
    <property type="match status" value="1"/>
</dbReference>
<dbReference type="HAMAP" id="MF_01321">
    <property type="entry name" value="RNApol_bact_RpoB"/>
    <property type="match status" value="1"/>
</dbReference>
<dbReference type="InterPro" id="IPR019462">
    <property type="entry name" value="DNA-dir_RNA_pol_bsu_external_1"/>
</dbReference>
<dbReference type="InterPro" id="IPR015712">
    <property type="entry name" value="DNA-dir_RNA_pol_su2"/>
</dbReference>
<dbReference type="InterPro" id="IPR007120">
    <property type="entry name" value="DNA-dir_RNAP_su2_dom"/>
</dbReference>
<dbReference type="InterPro" id="IPR037033">
    <property type="entry name" value="DNA-dir_RNAP_su2_hyb_sf"/>
</dbReference>
<dbReference type="InterPro" id="IPR010243">
    <property type="entry name" value="RNA_pol_bsu_bac"/>
</dbReference>
<dbReference type="InterPro" id="IPR007121">
    <property type="entry name" value="RNA_pol_bsu_CS"/>
</dbReference>
<dbReference type="InterPro" id="IPR007644">
    <property type="entry name" value="RNA_pol_bsu_protrusion"/>
</dbReference>
<dbReference type="InterPro" id="IPR007642">
    <property type="entry name" value="RNA_pol_Rpb2_2"/>
</dbReference>
<dbReference type="InterPro" id="IPR037034">
    <property type="entry name" value="RNA_pol_Rpb2_2_sf"/>
</dbReference>
<dbReference type="InterPro" id="IPR007645">
    <property type="entry name" value="RNA_pol_Rpb2_3"/>
</dbReference>
<dbReference type="InterPro" id="IPR007641">
    <property type="entry name" value="RNA_pol_Rpb2_7"/>
</dbReference>
<dbReference type="InterPro" id="IPR014724">
    <property type="entry name" value="RNA_pol_RPB2_OB-fold"/>
</dbReference>
<dbReference type="NCBIfam" id="NF001616">
    <property type="entry name" value="PRK00405.1"/>
    <property type="match status" value="1"/>
</dbReference>
<dbReference type="NCBIfam" id="TIGR02013">
    <property type="entry name" value="rpoB"/>
    <property type="match status" value="1"/>
</dbReference>
<dbReference type="PANTHER" id="PTHR20856">
    <property type="entry name" value="DNA-DIRECTED RNA POLYMERASE I SUBUNIT 2"/>
    <property type="match status" value="1"/>
</dbReference>
<dbReference type="Pfam" id="PF04563">
    <property type="entry name" value="RNA_pol_Rpb2_1"/>
    <property type="match status" value="1"/>
</dbReference>
<dbReference type="Pfam" id="PF04561">
    <property type="entry name" value="RNA_pol_Rpb2_2"/>
    <property type="match status" value="2"/>
</dbReference>
<dbReference type="Pfam" id="PF04565">
    <property type="entry name" value="RNA_pol_Rpb2_3"/>
    <property type="match status" value="1"/>
</dbReference>
<dbReference type="Pfam" id="PF10385">
    <property type="entry name" value="RNA_pol_Rpb2_45"/>
    <property type="match status" value="1"/>
</dbReference>
<dbReference type="Pfam" id="PF00562">
    <property type="entry name" value="RNA_pol_Rpb2_6"/>
    <property type="match status" value="1"/>
</dbReference>
<dbReference type="Pfam" id="PF04560">
    <property type="entry name" value="RNA_pol_Rpb2_7"/>
    <property type="match status" value="1"/>
</dbReference>
<dbReference type="SUPFAM" id="SSF64484">
    <property type="entry name" value="beta and beta-prime subunits of DNA dependent RNA-polymerase"/>
    <property type="match status" value="1"/>
</dbReference>
<dbReference type="PROSITE" id="PS01166">
    <property type="entry name" value="RNA_POL_BETA"/>
    <property type="match status" value="1"/>
</dbReference>
<organism>
    <name type="scientific">Staphylococcus aureus (strain NCTC 8325 / PS 47)</name>
    <dbReference type="NCBI Taxonomy" id="93061"/>
    <lineage>
        <taxon>Bacteria</taxon>
        <taxon>Bacillati</taxon>
        <taxon>Bacillota</taxon>
        <taxon>Bacilli</taxon>
        <taxon>Bacillales</taxon>
        <taxon>Staphylococcaceae</taxon>
        <taxon>Staphylococcus</taxon>
    </lineage>
</organism>
<accession>P47768</accession>
<accession>Q2G0N6</accession>
<evidence type="ECO:0000255" key="1">
    <source>
        <dbReference type="HAMAP-Rule" id="MF_01321"/>
    </source>
</evidence>
<evidence type="ECO:0000305" key="2"/>
<sequence>MAGQVVQYGRHRKRRNYARISEVLELPNLIEIQTKSYEWFLREGLIEMFRDISPIEDFTGNLSLEFVDYRLGEPKYDLEESKNRDATYAAPLRVKVRLIIKETGEVKEQEVFMGDFPLMTDTGTFVINGAERVIVSQLVRSPSVYFNEKIDKNGRENYDATIIPNRGAWLEYETDAKDVVYVRIDRTRKLPLTVLLRALGFSSDQEIVDLLGDNEYLRNTLEKDGTENTEQALLEIYERLRPGEPPTVENAKSLLYSRFFDPKRYDLASVGRYKTNKKLHLKHRLFNQKLAEPIVNTETGEIVVEEGTVLDRRKIDEIMDVLESNANSEVFELHGSVIDEPVEIQSIKVYVPNDDEGRTTTVIGNAFPDSEVKCITPADIIASMSYFFNLLSGIGYTDDIDHLGNRRLRSVGELLQNQFRIGLSRMERVVRERMSIQDTESITPQQLINIRPVIASIKEFFGSSQLSQFMDQANPLAELTHKRRLSALGPGGLTRERAQMEVRDVHYSHYGRMCPIETPEGPNIGLINSLSSYARVNEFGFIETPYRKVDLDTHAITDQIDYLTADEEDSYVVAQANSKLDENGRFMDDEVVCRFRGNNTVMAKEKMDYMDVSPKQVVSAATACIPFLENDDSNRALMGANMQRQAVPLMNPEAPFVGTGMEHVAARDSGAAITAKHRGRVEHVESNEILVRRLVEENGVEHEGELDRYPLAKFKRSNSGTCYNQRPIVAVGDVVEYNEILADGPSMELGEMALGRNVVVGFMTWDGYNYEDAVIMSERLVKDDVYTSIHIEEYESEARDTKLGPEEITRDIPNVSESALKNLDDRGIVYIGAEVKDGDILVGKVTPKGVTELTAEERLLHAIFGEKAREVRDTSLRVPHGAGGIVLDVKVFNREEGDDTLSPGVNQLVRVYIVQKRKIHVGDKMCGRHGNKGVISKIVPEEDMPYLPDGRPIDIMLNPLGVPSRMNIGQVLELHLGMAAKNLGIHVASPVFDGANDDDVWSTIEEAGMARDGKTVLYDGRTGEPFDNRISVGVMYMLKLAHMVDDKLHARSTGPYSLVTQQPLGGKAQFGGQRFGEMEVWALEAYGAAYTLQEILTYKSDDTVGRVKTYEAIVKGENISRPSVPESFRVLMKELQSLGLDVKVMDEQDNEIEMTDVDDDDVVERKVDLQQNDAPETQKEVTD</sequence>
<gene>
    <name evidence="1" type="primary">rpoB</name>
    <name type="ordered locus">SAOUHSC_00524</name>
</gene>
<feature type="chain" id="PRO_0000047964" description="DNA-directed RNA polymerase subunit beta">
    <location>
        <begin position="1"/>
        <end position="1183"/>
    </location>
</feature>
<feature type="sequence conflict" description="In Ref. 1; CAA45512." evidence="2" ref="1">
    <original>EA</original>
    <variation>RRQ</variation>
    <location>
        <begin position="797"/>
        <end position="798"/>
    </location>
</feature>
<feature type="sequence conflict" description="In Ref. 1; CAA45512." evidence="2" ref="1">
    <original>EVTD</original>
    <variation>SY</variation>
    <location>
        <begin position="1180"/>
        <end position="1183"/>
    </location>
</feature>